<dbReference type="EC" id="2.7.7.77" evidence="1"/>
<dbReference type="EMBL" id="CP001048">
    <property type="protein sequence ID" value="ACC87014.1"/>
    <property type="molecule type" value="Genomic_DNA"/>
</dbReference>
<dbReference type="RefSeq" id="WP_002213171.1">
    <property type="nucleotide sequence ID" value="NZ_CP009780.1"/>
</dbReference>
<dbReference type="SMR" id="B2JYK0"/>
<dbReference type="GeneID" id="57974576"/>
<dbReference type="KEGG" id="ypb:YPTS_0015"/>
<dbReference type="PATRIC" id="fig|502801.10.peg.3690"/>
<dbReference type="GO" id="GO:0005737">
    <property type="term" value="C:cytoplasm"/>
    <property type="evidence" value="ECO:0007669"/>
    <property type="project" value="UniProtKB-SubCell"/>
</dbReference>
<dbReference type="GO" id="GO:0005525">
    <property type="term" value="F:GTP binding"/>
    <property type="evidence" value="ECO:0007669"/>
    <property type="project" value="UniProtKB-UniRule"/>
</dbReference>
<dbReference type="GO" id="GO:0046872">
    <property type="term" value="F:metal ion binding"/>
    <property type="evidence" value="ECO:0007669"/>
    <property type="project" value="UniProtKB-KW"/>
</dbReference>
<dbReference type="GO" id="GO:0061603">
    <property type="term" value="F:molybdenum cofactor guanylyltransferase activity"/>
    <property type="evidence" value="ECO:0007669"/>
    <property type="project" value="UniProtKB-EC"/>
</dbReference>
<dbReference type="GO" id="GO:1902758">
    <property type="term" value="P:bis(molybdopterin guanine dinucleotide)molybdenum biosynthetic process"/>
    <property type="evidence" value="ECO:0007669"/>
    <property type="project" value="TreeGrafter"/>
</dbReference>
<dbReference type="CDD" id="cd02503">
    <property type="entry name" value="MobA"/>
    <property type="match status" value="1"/>
</dbReference>
<dbReference type="Gene3D" id="3.90.550.10">
    <property type="entry name" value="Spore Coat Polysaccharide Biosynthesis Protein SpsA, Chain A"/>
    <property type="match status" value="1"/>
</dbReference>
<dbReference type="HAMAP" id="MF_00316">
    <property type="entry name" value="MobA"/>
    <property type="match status" value="1"/>
</dbReference>
<dbReference type="InterPro" id="IPR025877">
    <property type="entry name" value="MobA-like_NTP_Trfase"/>
</dbReference>
<dbReference type="InterPro" id="IPR013482">
    <property type="entry name" value="Molybde_CF_guanTrfase"/>
</dbReference>
<dbReference type="InterPro" id="IPR029044">
    <property type="entry name" value="Nucleotide-diphossugar_trans"/>
</dbReference>
<dbReference type="NCBIfam" id="TIGR02665">
    <property type="entry name" value="molyb_mobA"/>
    <property type="match status" value="1"/>
</dbReference>
<dbReference type="PANTHER" id="PTHR19136">
    <property type="entry name" value="MOLYBDENUM COFACTOR GUANYLYLTRANSFERASE"/>
    <property type="match status" value="1"/>
</dbReference>
<dbReference type="PANTHER" id="PTHR19136:SF81">
    <property type="entry name" value="MOLYBDENUM COFACTOR GUANYLYLTRANSFERASE"/>
    <property type="match status" value="1"/>
</dbReference>
<dbReference type="Pfam" id="PF12804">
    <property type="entry name" value="NTP_transf_3"/>
    <property type="match status" value="1"/>
</dbReference>
<dbReference type="SUPFAM" id="SSF53448">
    <property type="entry name" value="Nucleotide-diphospho-sugar transferases"/>
    <property type="match status" value="1"/>
</dbReference>
<evidence type="ECO:0000255" key="1">
    <source>
        <dbReference type="HAMAP-Rule" id="MF_00316"/>
    </source>
</evidence>
<keyword id="KW-0963">Cytoplasm</keyword>
<keyword id="KW-0342">GTP-binding</keyword>
<keyword id="KW-0460">Magnesium</keyword>
<keyword id="KW-0479">Metal-binding</keyword>
<keyword id="KW-0501">Molybdenum cofactor biosynthesis</keyword>
<keyword id="KW-0547">Nucleotide-binding</keyword>
<keyword id="KW-0808">Transferase</keyword>
<protein>
    <recommendedName>
        <fullName evidence="1">Molybdenum cofactor guanylyltransferase</fullName>
        <shortName evidence="1">MoCo guanylyltransferase</shortName>
        <ecNumber evidence="1">2.7.7.77</ecNumber>
    </recommendedName>
    <alternativeName>
        <fullName evidence="1">GTP:molybdopterin guanylyltransferase</fullName>
    </alternativeName>
    <alternativeName>
        <fullName evidence="1">Mo-MPT guanylyltransferase</fullName>
    </alternativeName>
    <alternativeName>
        <fullName evidence="1">Molybdopterin guanylyltransferase</fullName>
    </alternativeName>
    <alternativeName>
        <fullName evidence="1">Molybdopterin-guanine dinucleotide synthase</fullName>
        <shortName evidence="1">MGD synthase</shortName>
    </alternativeName>
</protein>
<organism>
    <name type="scientific">Yersinia pseudotuberculosis serotype IB (strain PB1/+)</name>
    <dbReference type="NCBI Taxonomy" id="502801"/>
    <lineage>
        <taxon>Bacteria</taxon>
        <taxon>Pseudomonadati</taxon>
        <taxon>Pseudomonadota</taxon>
        <taxon>Gammaproteobacteria</taxon>
        <taxon>Enterobacterales</taxon>
        <taxon>Yersiniaceae</taxon>
        <taxon>Yersinia</taxon>
    </lineage>
</organism>
<reference key="1">
    <citation type="submission" date="2008-04" db="EMBL/GenBank/DDBJ databases">
        <title>Complete sequence of Yersinia pseudotuberculosis PB1/+.</title>
        <authorList>
            <person name="Copeland A."/>
            <person name="Lucas S."/>
            <person name="Lapidus A."/>
            <person name="Glavina del Rio T."/>
            <person name="Dalin E."/>
            <person name="Tice H."/>
            <person name="Bruce D."/>
            <person name="Goodwin L."/>
            <person name="Pitluck S."/>
            <person name="Munk A.C."/>
            <person name="Brettin T."/>
            <person name="Detter J.C."/>
            <person name="Han C."/>
            <person name="Tapia R."/>
            <person name="Schmutz J."/>
            <person name="Larimer F."/>
            <person name="Land M."/>
            <person name="Hauser L."/>
            <person name="Challacombe J.F."/>
            <person name="Green L."/>
            <person name="Lindler L.E."/>
            <person name="Nikolich M.P."/>
            <person name="Richardson P."/>
        </authorList>
    </citation>
    <scope>NUCLEOTIDE SEQUENCE [LARGE SCALE GENOMIC DNA]</scope>
    <source>
        <strain>PB1/+</strain>
    </source>
</reference>
<feature type="chain" id="PRO_1000115811" description="Molybdenum cofactor guanylyltransferase">
    <location>
        <begin position="1"/>
        <end position="195"/>
    </location>
</feature>
<feature type="binding site" evidence="1">
    <location>
        <begin position="10"/>
        <end position="12"/>
    </location>
    <ligand>
        <name>GTP</name>
        <dbReference type="ChEBI" id="CHEBI:37565"/>
    </ligand>
</feature>
<feature type="binding site" evidence="1">
    <location>
        <position position="23"/>
    </location>
    <ligand>
        <name>GTP</name>
        <dbReference type="ChEBI" id="CHEBI:37565"/>
    </ligand>
</feature>
<feature type="binding site" evidence="1">
    <location>
        <position position="51"/>
    </location>
    <ligand>
        <name>GTP</name>
        <dbReference type="ChEBI" id="CHEBI:37565"/>
    </ligand>
</feature>
<feature type="binding site" evidence="1">
    <location>
        <position position="69"/>
    </location>
    <ligand>
        <name>GTP</name>
        <dbReference type="ChEBI" id="CHEBI:37565"/>
    </ligand>
</feature>
<feature type="binding site" evidence="1">
    <location>
        <position position="99"/>
    </location>
    <ligand>
        <name>GTP</name>
        <dbReference type="ChEBI" id="CHEBI:37565"/>
    </ligand>
</feature>
<feature type="binding site" evidence="1">
    <location>
        <position position="99"/>
    </location>
    <ligand>
        <name>Mg(2+)</name>
        <dbReference type="ChEBI" id="CHEBI:18420"/>
    </ligand>
</feature>
<comment type="function">
    <text evidence="1">Transfers a GMP moiety from GTP to Mo-molybdopterin (Mo-MPT) cofactor (Moco or molybdenum cofactor) to form Mo-molybdopterin guanine dinucleotide (Mo-MGD) cofactor.</text>
</comment>
<comment type="catalytic activity">
    <reaction evidence="1">
        <text>Mo-molybdopterin + GTP + H(+) = Mo-molybdopterin guanine dinucleotide + diphosphate</text>
        <dbReference type="Rhea" id="RHEA:34243"/>
        <dbReference type="ChEBI" id="CHEBI:15378"/>
        <dbReference type="ChEBI" id="CHEBI:33019"/>
        <dbReference type="ChEBI" id="CHEBI:37565"/>
        <dbReference type="ChEBI" id="CHEBI:71302"/>
        <dbReference type="ChEBI" id="CHEBI:71310"/>
        <dbReference type="EC" id="2.7.7.77"/>
    </reaction>
</comment>
<comment type="cofactor">
    <cofactor evidence="1">
        <name>Mg(2+)</name>
        <dbReference type="ChEBI" id="CHEBI:18420"/>
    </cofactor>
</comment>
<comment type="subunit">
    <text evidence="1">Monomer.</text>
</comment>
<comment type="subcellular location">
    <subcellularLocation>
        <location evidence="1">Cytoplasm</location>
    </subcellularLocation>
</comment>
<comment type="domain">
    <text evidence="1">The N-terminal domain determines nucleotide recognition and specific binding, while the C-terminal domain determines the specific binding to the target protein.</text>
</comment>
<comment type="similarity">
    <text evidence="1">Belongs to the MobA family.</text>
</comment>
<sequence length="195" mass="21445">MQPNITGVILAGGRSSRMGGNDKGLIPLNGKPLFQYVIDRFKPQVSDLVINANRNQGLYKESGIPVIDDIITGFVGPLAGMHAGLSYASTEWVVFAPCDVPALPSDLVSQLWQGKKQALAAYANDDERAHPTFALMHISLKTQLADYLIRGDRKLMLFLDSINAQRVKFSGKADLFSNLNTPADCDLWEQKRRGQ</sequence>
<name>MOBA_YERPB</name>
<accession>B2JYK0</accession>
<gene>
    <name evidence="1" type="primary">mobA</name>
    <name type="ordered locus">YPTS_0015</name>
</gene>
<proteinExistence type="inferred from homology"/>